<evidence type="ECO:0000255" key="1">
    <source>
        <dbReference type="PROSITE-ProRule" id="PRU00541"/>
    </source>
</evidence>
<evidence type="ECO:0000255" key="2">
    <source>
        <dbReference type="PROSITE-ProRule" id="PRU00542"/>
    </source>
</evidence>
<evidence type="ECO:0000255" key="3">
    <source>
        <dbReference type="PROSITE-ProRule" id="PRU01343"/>
    </source>
</evidence>
<evidence type="ECO:0000256" key="4">
    <source>
        <dbReference type="SAM" id="MobiDB-lite"/>
    </source>
</evidence>
<evidence type="ECO:0000269" key="5">
    <source>
    </source>
</evidence>
<evidence type="ECO:0000269" key="6">
    <source>
    </source>
</evidence>
<evidence type="ECO:0000269" key="7">
    <source>
    </source>
</evidence>
<evidence type="ECO:0000269" key="8">
    <source>
    </source>
</evidence>
<evidence type="ECO:0000269" key="9">
    <source>
    </source>
</evidence>
<evidence type="ECO:0000303" key="10">
    <source>
    </source>
</evidence>
<evidence type="ECO:0000305" key="11"/>
<evidence type="ECO:0007744" key="12">
    <source>
    </source>
</evidence>
<evidence type="ECO:0007744" key="13">
    <source>
    </source>
</evidence>
<evidence type="ECO:0007744" key="14">
    <source>
    </source>
</evidence>
<evidence type="ECO:0007744" key="15">
    <source>
    </source>
</evidence>
<organism>
    <name type="scientific">Homo sapiens</name>
    <name type="common">Human</name>
    <dbReference type="NCBI Taxonomy" id="9606"/>
    <lineage>
        <taxon>Eukaryota</taxon>
        <taxon>Metazoa</taxon>
        <taxon>Chordata</taxon>
        <taxon>Craniata</taxon>
        <taxon>Vertebrata</taxon>
        <taxon>Euteleostomi</taxon>
        <taxon>Mammalia</taxon>
        <taxon>Eutheria</taxon>
        <taxon>Euarchontoglires</taxon>
        <taxon>Primates</taxon>
        <taxon>Haplorrhini</taxon>
        <taxon>Catarrhini</taxon>
        <taxon>Hominidae</taxon>
        <taxon>Homo</taxon>
    </lineage>
</organism>
<feature type="chain" id="PRO_0000074376" description="Transcription termination factor 2">
    <location>
        <begin position="1"/>
        <end position="1162"/>
    </location>
</feature>
<feature type="domain" description="Helicase ATP-binding" evidence="1">
    <location>
        <begin position="583"/>
        <end position="786"/>
    </location>
</feature>
<feature type="domain" description="Helicase C-terminal" evidence="2">
    <location>
        <begin position="995"/>
        <end position="1157"/>
    </location>
</feature>
<feature type="zinc finger region" description="GRF-type" evidence="3">
    <location>
        <begin position="6"/>
        <end position="46"/>
    </location>
</feature>
<feature type="region of interest" description="Disordered" evidence="4">
    <location>
        <begin position="97"/>
        <end position="116"/>
    </location>
</feature>
<feature type="region of interest" description="Disordered" evidence="4">
    <location>
        <begin position="142"/>
        <end position="358"/>
    </location>
</feature>
<feature type="region of interest" description="Disordered" evidence="4">
    <location>
        <begin position="388"/>
        <end position="407"/>
    </location>
</feature>
<feature type="region of interest" description="Disordered" evidence="4">
    <location>
        <begin position="459"/>
        <end position="503"/>
    </location>
</feature>
<feature type="region of interest" description="Disordered" evidence="4">
    <location>
        <begin position="871"/>
        <end position="890"/>
    </location>
</feature>
<feature type="short sequence motif" description="DEAH box">
    <location>
        <begin position="737"/>
        <end position="740"/>
    </location>
</feature>
<feature type="compositionally biased region" description="Polar residues" evidence="4">
    <location>
        <begin position="105"/>
        <end position="116"/>
    </location>
</feature>
<feature type="compositionally biased region" description="Basic and acidic residues" evidence="4">
    <location>
        <begin position="142"/>
        <end position="178"/>
    </location>
</feature>
<feature type="compositionally biased region" description="Polar residues" evidence="4">
    <location>
        <begin position="219"/>
        <end position="232"/>
    </location>
</feature>
<feature type="compositionally biased region" description="Low complexity" evidence="4">
    <location>
        <begin position="233"/>
        <end position="245"/>
    </location>
</feature>
<feature type="compositionally biased region" description="Basic and acidic residues" evidence="4">
    <location>
        <begin position="246"/>
        <end position="258"/>
    </location>
</feature>
<feature type="compositionally biased region" description="Polar residues" evidence="4">
    <location>
        <begin position="261"/>
        <end position="274"/>
    </location>
</feature>
<feature type="compositionally biased region" description="Low complexity" evidence="4">
    <location>
        <begin position="323"/>
        <end position="338"/>
    </location>
</feature>
<feature type="compositionally biased region" description="Polar residues" evidence="4">
    <location>
        <begin position="459"/>
        <end position="485"/>
    </location>
</feature>
<feature type="compositionally biased region" description="Polar residues" evidence="4">
    <location>
        <begin position="877"/>
        <end position="888"/>
    </location>
</feature>
<feature type="binding site" evidence="3">
    <location>
        <position position="6"/>
    </location>
    <ligand>
        <name>Zn(2+)</name>
        <dbReference type="ChEBI" id="CHEBI:29105"/>
    </ligand>
</feature>
<feature type="binding site" evidence="3">
    <location>
        <position position="9"/>
    </location>
    <ligand>
        <name>Zn(2+)</name>
        <dbReference type="ChEBI" id="CHEBI:29105"/>
    </ligand>
</feature>
<feature type="binding site" evidence="3">
    <location>
        <position position="32"/>
    </location>
    <ligand>
        <name>Zn(2+)</name>
        <dbReference type="ChEBI" id="CHEBI:29105"/>
    </ligand>
</feature>
<feature type="binding site" evidence="3">
    <location>
        <position position="37"/>
    </location>
    <ligand>
        <name>Zn(2+)</name>
        <dbReference type="ChEBI" id="CHEBI:29105"/>
    </ligand>
</feature>
<feature type="binding site" evidence="1">
    <location>
        <begin position="596"/>
        <end position="603"/>
    </location>
    <ligand>
        <name>ATP</name>
        <dbReference type="ChEBI" id="CHEBI:30616"/>
    </ligand>
</feature>
<feature type="modified residue" description="Phosphoserine" evidence="12 13">
    <location>
        <position position="460"/>
    </location>
</feature>
<feature type="modified residue" description="Phosphoserine" evidence="12 14">
    <location>
        <position position="883"/>
    </location>
</feature>
<feature type="modified residue" description="Phosphoserine" evidence="13">
    <location>
        <position position="908"/>
    </location>
</feature>
<feature type="cross-link" description="Glycyl lysine isopeptide (Lys-Gly) (interchain with G-Cter in SUMO2)" evidence="15">
    <location>
        <position position="143"/>
    </location>
</feature>
<feature type="splice variant" id="VSP_015370" description="In isoform 2." evidence="10">
    <original>DSCDFTSHGTLIICPASLIHHWKNEVEKRVNSNKLRVYLYHG</original>
    <variation>GRQKCLNSLPFPTSFEPPKRGTSSAKKGHLWSYLITLLENQY</variation>
    <location>
        <begin position="635"/>
        <end position="676"/>
    </location>
</feature>
<feature type="splice variant" id="VSP_015371" description="In isoform 2." evidence="10">
    <location>
        <begin position="677"/>
        <end position="1162"/>
    </location>
</feature>
<feature type="sequence variant" id="VAR_023393" description="In dbSNP:rs998532." evidence="7">
    <original>K</original>
    <variation>E</variation>
    <location>
        <position position="167"/>
    </location>
</feature>
<feature type="sequence variant" id="VAR_034431" description="In dbSNP:rs7535524.">
    <original>K</original>
    <variation>R</variation>
    <location>
        <position position="213"/>
    </location>
</feature>
<feature type="sequence variant" id="VAR_061234" description="In dbSNP:rs34334470.">
    <original>E</original>
    <variation>G</variation>
    <location>
        <position position="256"/>
    </location>
</feature>
<feature type="sequence variant" id="VAR_061235" description="In dbSNP:rs41276572.">
    <original>K</original>
    <variation>R</variation>
    <location>
        <position position="1134"/>
    </location>
</feature>
<feature type="sequence variant" id="VAR_061236" description="In dbSNP:rs34236116." evidence="6">
    <original>D</original>
    <variation>H</variation>
    <location>
        <position position="1155"/>
    </location>
</feature>
<feature type="sequence conflict" description="In Ref. 2; AAD49435." evidence="11" ref="2">
    <original>L</original>
    <variation>P</variation>
    <location>
        <position position="64"/>
    </location>
</feature>
<feature type="sequence conflict" description="In Ref. 2; AAD49435." evidence="11" ref="2">
    <original>R</original>
    <variation>G</variation>
    <location>
        <position position="80"/>
    </location>
</feature>
<feature type="sequence conflict" description="In Ref. 1; AAC64044." evidence="11" ref="1">
    <original>H</original>
    <variation>R</variation>
    <location>
        <position position="675"/>
    </location>
</feature>
<sequence>MEEVRCPEHGTFCFLKTGVRDGPNKGKSFYVCRADTCSFVRATDIPVSHCLLHEDFVVELQGLLLPQDKKEYRLFFRCIRSKAEGKRWCGSIPWQDPDSKEHSVSNKSQHASETFHHSSNWLRNPFKVLDKNQEPALWKQLIKGEGEEKKADKKQREKGDQLFDQKKEQKPEMMEKDLSSGLVPKKKQSVVQEKKQEEGAEIQCEAETGGTHKRDFSEIKSQQCQGNELTRPSASSQEKSSGKSQDVQRESEPLREKVTQLLPQNVHSHNSISKPQKGGPLNKEYTNWEAKETKAKDGPSIQATQKSLPQGHFQERPETHSVPAPGGPAAQAAPAAPGLSLGEGREAATSSDDEEEDDVVFVSSKPGSPLLFDSTLDLETKENLQFPDRSVQRKVSPASGVSKKVEPSDPVARRVYLTTQLKQKKSTLASVNIQALPDKGQKLIKQIQELEEVLSGLTLSPEQGTNEKSNSQVPQQSHFTKTTTGPPHLVPPQPLPRRGTQPVGSLELKSACQVTAGGSSQCYRGHTNQDHVHAVWKITSEAIGQLHRSLESCPGETVVAEDPAGLKVPLLLHQKQALAWLLWRESQKPQGGILADDMGLGKTLTMIALILTQKNQEKKEEKEKSTALTWLSKDDSCDFTSHGTLIICPASLIHHWKNEVEKRVNSNKLRVYLYHGPNRDSRARVLSTYDIVITTYSLVAKEIPTNKQEAEIPGANLNVEGTSTPLLRIAWARIILDEAHNVKNPRVQTSIAVCKLQACARWAVTGTPIQNNLLDMYSLLKFLRCSPFDEFNLWRSQVDNGSKKGGERLSILTKSLLLRRTKDQLDSTGRPLVILPQRKFQLHHLKLSEDEETVYNVFFARSRSALQSYLKRHESRGNQSGRSPNNPFSRVALEFGSEEPRHSEAADSPRSSTVHILSQLLRLRQCCCHLSLLKSALDPMELKGEGLVLSLEEQLSALTLSELRDSEPSSTVSLNGTFFKMELFEGMRESTKISSLLAELEAIQRNSASQKSVIVSQWTNMLKVVALHLKKHGLTYATIDGSVNPKQRMDLVEAFNHSRGPQVMLISLLAGGVGLNLTGGNHLFLLDMHWNPSLEDQACDRIYRVGQQKDVVIHRFVCEGTVEEKILQLQEKKKDLAKQVLSGSGESVTKLTLADLRVLFGI</sequence>
<reference key="1">
    <citation type="journal article" date="1998" name="J. Biol. Chem.">
        <title>A human RNA polymerase II transcription termination factor is a SWI2/SNF2 family member.</title>
        <authorList>
            <person name="Liu M."/>
            <person name="Xie Z."/>
            <person name="Price D.H."/>
        </authorList>
    </citation>
    <scope>NUCLEOTIDE SEQUENCE [MRNA] (ISOFORM 1)</scope>
    <scope>FUNCTION</scope>
</reference>
<reference key="2">
    <citation type="journal article" date="2003" name="Biochem. Biophys. Res. Commun.">
        <title>hLodestar/HuF2 interacts with CDC5L and is involved in pre-mRNA splicing.</title>
        <authorList>
            <person name="Leonard D."/>
            <person name="Ajuh P."/>
            <person name="Lamond A.I."/>
            <person name="Legerski R.J."/>
        </authorList>
    </citation>
    <scope>NUCLEOTIDE SEQUENCE [MRNA] (ISOFORM 1)</scope>
    <scope>FUNCTION</scope>
    <scope>INTERACTION WITH CDC5L</scope>
    <scope>IDENTIFICATION AS PART OF THE SPLICEOSOME</scope>
    <scope>VARIANT HIS-1155</scope>
</reference>
<reference key="3">
    <citation type="journal article" date="2004" name="Nat. Genet.">
        <title>Complete sequencing and characterization of 21,243 full-length human cDNAs.</title>
        <authorList>
            <person name="Ota T."/>
            <person name="Suzuki Y."/>
            <person name="Nishikawa T."/>
            <person name="Otsuki T."/>
            <person name="Sugiyama T."/>
            <person name="Irie R."/>
            <person name="Wakamatsu A."/>
            <person name="Hayashi K."/>
            <person name="Sato H."/>
            <person name="Nagai K."/>
            <person name="Kimura K."/>
            <person name="Makita H."/>
            <person name="Sekine M."/>
            <person name="Obayashi M."/>
            <person name="Nishi T."/>
            <person name="Shibahara T."/>
            <person name="Tanaka T."/>
            <person name="Ishii S."/>
            <person name="Yamamoto J."/>
            <person name="Saito K."/>
            <person name="Kawai Y."/>
            <person name="Isono Y."/>
            <person name="Nakamura Y."/>
            <person name="Nagahari K."/>
            <person name="Murakami K."/>
            <person name="Yasuda T."/>
            <person name="Iwayanagi T."/>
            <person name="Wagatsuma M."/>
            <person name="Shiratori A."/>
            <person name="Sudo H."/>
            <person name="Hosoiri T."/>
            <person name="Kaku Y."/>
            <person name="Kodaira H."/>
            <person name="Kondo H."/>
            <person name="Sugawara M."/>
            <person name="Takahashi M."/>
            <person name="Kanda K."/>
            <person name="Yokoi T."/>
            <person name="Furuya T."/>
            <person name="Kikkawa E."/>
            <person name="Omura Y."/>
            <person name="Abe K."/>
            <person name="Kamihara K."/>
            <person name="Katsuta N."/>
            <person name="Sato K."/>
            <person name="Tanikawa M."/>
            <person name="Yamazaki M."/>
            <person name="Ninomiya K."/>
            <person name="Ishibashi T."/>
            <person name="Yamashita H."/>
            <person name="Murakawa K."/>
            <person name="Fujimori K."/>
            <person name="Tanai H."/>
            <person name="Kimata M."/>
            <person name="Watanabe M."/>
            <person name="Hiraoka S."/>
            <person name="Chiba Y."/>
            <person name="Ishida S."/>
            <person name="Ono Y."/>
            <person name="Takiguchi S."/>
            <person name="Watanabe S."/>
            <person name="Yosida M."/>
            <person name="Hotuta T."/>
            <person name="Kusano J."/>
            <person name="Kanehori K."/>
            <person name="Takahashi-Fujii A."/>
            <person name="Hara H."/>
            <person name="Tanase T.-O."/>
            <person name="Nomura Y."/>
            <person name="Togiya S."/>
            <person name="Komai F."/>
            <person name="Hara R."/>
            <person name="Takeuchi K."/>
            <person name="Arita M."/>
            <person name="Imose N."/>
            <person name="Musashino K."/>
            <person name="Yuuki H."/>
            <person name="Oshima A."/>
            <person name="Sasaki N."/>
            <person name="Aotsuka S."/>
            <person name="Yoshikawa Y."/>
            <person name="Matsunawa H."/>
            <person name="Ichihara T."/>
            <person name="Shiohata N."/>
            <person name="Sano S."/>
            <person name="Moriya S."/>
            <person name="Momiyama H."/>
            <person name="Satoh N."/>
            <person name="Takami S."/>
            <person name="Terashima Y."/>
            <person name="Suzuki O."/>
            <person name="Nakagawa S."/>
            <person name="Senoh A."/>
            <person name="Mizoguchi H."/>
            <person name="Goto Y."/>
            <person name="Shimizu F."/>
            <person name="Wakebe H."/>
            <person name="Hishigaki H."/>
            <person name="Watanabe T."/>
            <person name="Sugiyama A."/>
            <person name="Takemoto M."/>
            <person name="Kawakami B."/>
            <person name="Yamazaki M."/>
            <person name="Watanabe K."/>
            <person name="Kumagai A."/>
            <person name="Itakura S."/>
            <person name="Fukuzumi Y."/>
            <person name="Fujimori Y."/>
            <person name="Komiyama M."/>
            <person name="Tashiro H."/>
            <person name="Tanigami A."/>
            <person name="Fujiwara T."/>
            <person name="Ono T."/>
            <person name="Yamada K."/>
            <person name="Fujii Y."/>
            <person name="Ozaki K."/>
            <person name="Hirao M."/>
            <person name="Ohmori Y."/>
            <person name="Kawabata A."/>
            <person name="Hikiji T."/>
            <person name="Kobatake N."/>
            <person name="Inagaki H."/>
            <person name="Ikema Y."/>
            <person name="Okamoto S."/>
            <person name="Okitani R."/>
            <person name="Kawakami T."/>
            <person name="Noguchi S."/>
            <person name="Itoh T."/>
            <person name="Shigeta K."/>
            <person name="Senba T."/>
            <person name="Matsumura K."/>
            <person name="Nakajima Y."/>
            <person name="Mizuno T."/>
            <person name="Morinaga M."/>
            <person name="Sasaki M."/>
            <person name="Togashi T."/>
            <person name="Oyama M."/>
            <person name="Hata H."/>
            <person name="Watanabe M."/>
            <person name="Komatsu T."/>
            <person name="Mizushima-Sugano J."/>
            <person name="Satoh T."/>
            <person name="Shirai Y."/>
            <person name="Takahashi Y."/>
            <person name="Nakagawa K."/>
            <person name="Okumura K."/>
            <person name="Nagase T."/>
            <person name="Nomura N."/>
            <person name="Kikuchi H."/>
            <person name="Masuho Y."/>
            <person name="Yamashita R."/>
            <person name="Nakai K."/>
            <person name="Yada T."/>
            <person name="Nakamura Y."/>
            <person name="Ohara O."/>
            <person name="Isogai T."/>
            <person name="Sugano S."/>
        </authorList>
    </citation>
    <scope>NUCLEOTIDE SEQUENCE [LARGE SCALE MRNA] (ISOFORM 1)</scope>
    <scope>VARIANT GLU-167</scope>
</reference>
<reference key="4">
    <citation type="journal article" date="2006" name="Nature">
        <title>The DNA sequence and biological annotation of human chromosome 1.</title>
        <authorList>
            <person name="Gregory S.G."/>
            <person name="Barlow K.F."/>
            <person name="McLay K.E."/>
            <person name="Kaul R."/>
            <person name="Swarbreck D."/>
            <person name="Dunham A."/>
            <person name="Scott C.E."/>
            <person name="Howe K.L."/>
            <person name="Woodfine K."/>
            <person name="Spencer C.C.A."/>
            <person name="Jones M.C."/>
            <person name="Gillson C."/>
            <person name="Searle S."/>
            <person name="Zhou Y."/>
            <person name="Kokocinski F."/>
            <person name="McDonald L."/>
            <person name="Evans R."/>
            <person name="Phillips K."/>
            <person name="Atkinson A."/>
            <person name="Cooper R."/>
            <person name="Jones C."/>
            <person name="Hall R.E."/>
            <person name="Andrews T.D."/>
            <person name="Lloyd C."/>
            <person name="Ainscough R."/>
            <person name="Almeida J.P."/>
            <person name="Ambrose K.D."/>
            <person name="Anderson F."/>
            <person name="Andrew R.W."/>
            <person name="Ashwell R.I.S."/>
            <person name="Aubin K."/>
            <person name="Babbage A.K."/>
            <person name="Bagguley C.L."/>
            <person name="Bailey J."/>
            <person name="Beasley H."/>
            <person name="Bethel G."/>
            <person name="Bird C.P."/>
            <person name="Bray-Allen S."/>
            <person name="Brown J.Y."/>
            <person name="Brown A.J."/>
            <person name="Buckley D."/>
            <person name="Burton J."/>
            <person name="Bye J."/>
            <person name="Carder C."/>
            <person name="Chapman J.C."/>
            <person name="Clark S.Y."/>
            <person name="Clarke G."/>
            <person name="Clee C."/>
            <person name="Cobley V."/>
            <person name="Collier R.E."/>
            <person name="Corby N."/>
            <person name="Coville G.J."/>
            <person name="Davies J."/>
            <person name="Deadman R."/>
            <person name="Dunn M."/>
            <person name="Earthrowl M."/>
            <person name="Ellington A.G."/>
            <person name="Errington H."/>
            <person name="Frankish A."/>
            <person name="Frankland J."/>
            <person name="French L."/>
            <person name="Garner P."/>
            <person name="Garnett J."/>
            <person name="Gay L."/>
            <person name="Ghori M.R.J."/>
            <person name="Gibson R."/>
            <person name="Gilby L.M."/>
            <person name="Gillett W."/>
            <person name="Glithero R.J."/>
            <person name="Grafham D.V."/>
            <person name="Griffiths C."/>
            <person name="Griffiths-Jones S."/>
            <person name="Grocock R."/>
            <person name="Hammond S."/>
            <person name="Harrison E.S.I."/>
            <person name="Hart E."/>
            <person name="Haugen E."/>
            <person name="Heath P.D."/>
            <person name="Holmes S."/>
            <person name="Holt K."/>
            <person name="Howden P.J."/>
            <person name="Hunt A.R."/>
            <person name="Hunt S.E."/>
            <person name="Hunter G."/>
            <person name="Isherwood J."/>
            <person name="James R."/>
            <person name="Johnson C."/>
            <person name="Johnson D."/>
            <person name="Joy A."/>
            <person name="Kay M."/>
            <person name="Kershaw J.K."/>
            <person name="Kibukawa M."/>
            <person name="Kimberley A.M."/>
            <person name="King A."/>
            <person name="Knights A.J."/>
            <person name="Lad H."/>
            <person name="Laird G."/>
            <person name="Lawlor S."/>
            <person name="Leongamornlert D.A."/>
            <person name="Lloyd D.M."/>
            <person name="Loveland J."/>
            <person name="Lovell J."/>
            <person name="Lush M.J."/>
            <person name="Lyne R."/>
            <person name="Martin S."/>
            <person name="Mashreghi-Mohammadi M."/>
            <person name="Matthews L."/>
            <person name="Matthews N.S.W."/>
            <person name="McLaren S."/>
            <person name="Milne S."/>
            <person name="Mistry S."/>
            <person name="Moore M.J.F."/>
            <person name="Nickerson T."/>
            <person name="O'Dell C.N."/>
            <person name="Oliver K."/>
            <person name="Palmeiri A."/>
            <person name="Palmer S.A."/>
            <person name="Parker A."/>
            <person name="Patel D."/>
            <person name="Pearce A.V."/>
            <person name="Peck A.I."/>
            <person name="Pelan S."/>
            <person name="Phelps K."/>
            <person name="Phillimore B.J."/>
            <person name="Plumb R."/>
            <person name="Rajan J."/>
            <person name="Raymond C."/>
            <person name="Rouse G."/>
            <person name="Saenphimmachak C."/>
            <person name="Sehra H.K."/>
            <person name="Sheridan E."/>
            <person name="Shownkeen R."/>
            <person name="Sims S."/>
            <person name="Skuce C.D."/>
            <person name="Smith M."/>
            <person name="Steward C."/>
            <person name="Subramanian S."/>
            <person name="Sycamore N."/>
            <person name="Tracey A."/>
            <person name="Tromans A."/>
            <person name="Van Helmond Z."/>
            <person name="Wall M."/>
            <person name="Wallis J.M."/>
            <person name="White S."/>
            <person name="Whitehead S.L."/>
            <person name="Wilkinson J.E."/>
            <person name="Willey D.L."/>
            <person name="Williams H."/>
            <person name="Wilming L."/>
            <person name="Wray P.W."/>
            <person name="Wu Z."/>
            <person name="Coulson A."/>
            <person name="Vaudin M."/>
            <person name="Sulston J.E."/>
            <person name="Durbin R.M."/>
            <person name="Hubbard T."/>
            <person name="Wooster R."/>
            <person name="Dunham I."/>
            <person name="Carter N.P."/>
            <person name="McVean G."/>
            <person name="Ross M.T."/>
            <person name="Harrow J."/>
            <person name="Olson M.V."/>
            <person name="Beck S."/>
            <person name="Rogers J."/>
            <person name="Bentley D.R."/>
        </authorList>
    </citation>
    <scope>NUCLEOTIDE SEQUENCE [LARGE SCALE GENOMIC DNA]</scope>
</reference>
<reference key="5">
    <citation type="journal article" date="2004" name="Genome Res.">
        <title>The status, quality, and expansion of the NIH full-length cDNA project: the Mammalian Gene Collection (MGC).</title>
        <authorList>
            <consortium name="The MGC Project Team"/>
        </authorList>
    </citation>
    <scope>NUCLEOTIDE SEQUENCE [LARGE SCALE MRNA] (ISOFORM 2)</scope>
    <source>
        <tissue>Brain</tissue>
    </source>
</reference>
<reference key="6">
    <citation type="journal article" date="1999" name="J. Biol. Chem.">
        <title>Human transcription release factor 2 dissociates RNA polymerases I and II stalled at a cyclobutane thymine dimer.</title>
        <authorList>
            <person name="Hara R."/>
            <person name="Selby C.P."/>
            <person name="Liu M."/>
            <person name="Price D.H."/>
            <person name="Sancar A."/>
        </authorList>
    </citation>
    <scope>FUNCTION</scope>
</reference>
<reference key="7">
    <citation type="journal article" date="2004" name="Mol. Cell">
        <title>Involvement of transcription termination factor 2 in mitotic repression of transcription elongation.</title>
        <authorList>
            <person name="Jiang Y."/>
            <person name="Liu M."/>
            <person name="Spencer C.A."/>
            <person name="Price D.H."/>
        </authorList>
    </citation>
    <scope>FUNCTION</scope>
    <scope>SUBCELLULAR LOCATION</scope>
</reference>
<reference key="8">
    <citation type="journal article" date="2008" name="Mol. Cell">
        <title>Kinase-selective enrichment enables quantitative phosphoproteomics of the kinome across the cell cycle.</title>
        <authorList>
            <person name="Daub H."/>
            <person name="Olsen J.V."/>
            <person name="Bairlein M."/>
            <person name="Gnad F."/>
            <person name="Oppermann F.S."/>
            <person name="Korner R."/>
            <person name="Greff Z."/>
            <person name="Keri G."/>
            <person name="Stemmann O."/>
            <person name="Mann M."/>
        </authorList>
    </citation>
    <scope>IDENTIFICATION BY MASS SPECTROMETRY [LARGE SCALE ANALYSIS]</scope>
    <source>
        <tissue>Cervix carcinoma</tissue>
    </source>
</reference>
<reference key="9">
    <citation type="journal article" date="2008" name="Proc. Natl. Acad. Sci. U.S.A.">
        <title>A quantitative atlas of mitotic phosphorylation.</title>
        <authorList>
            <person name="Dephoure N."/>
            <person name="Zhou C."/>
            <person name="Villen J."/>
            <person name="Beausoleil S.A."/>
            <person name="Bakalarski C.E."/>
            <person name="Elledge S.J."/>
            <person name="Gygi S.P."/>
        </authorList>
    </citation>
    <scope>PHOSPHORYLATION [LARGE SCALE ANALYSIS] AT SER-460 AND SER-883</scope>
    <scope>IDENTIFICATION BY MASS SPECTROMETRY [LARGE SCALE ANALYSIS]</scope>
    <source>
        <tissue>Cervix carcinoma</tissue>
    </source>
</reference>
<reference key="10">
    <citation type="journal article" date="2010" name="Sci. Signal.">
        <title>Quantitative phosphoproteomics reveals widespread full phosphorylation site occupancy during mitosis.</title>
        <authorList>
            <person name="Olsen J.V."/>
            <person name="Vermeulen M."/>
            <person name="Santamaria A."/>
            <person name="Kumar C."/>
            <person name="Miller M.L."/>
            <person name="Jensen L.J."/>
            <person name="Gnad F."/>
            <person name="Cox J."/>
            <person name="Jensen T.S."/>
            <person name="Nigg E.A."/>
            <person name="Brunak S."/>
            <person name="Mann M."/>
        </authorList>
    </citation>
    <scope>PHOSPHORYLATION [LARGE SCALE ANALYSIS] AT SER-460 AND SER-908</scope>
    <scope>IDENTIFICATION BY MASS SPECTROMETRY [LARGE SCALE ANALYSIS]</scope>
    <source>
        <tissue>Cervix carcinoma</tissue>
    </source>
</reference>
<reference key="11">
    <citation type="journal article" date="2011" name="BMC Syst. Biol.">
        <title>Initial characterization of the human central proteome.</title>
        <authorList>
            <person name="Burkard T.R."/>
            <person name="Planyavsky M."/>
            <person name="Kaupe I."/>
            <person name="Breitwieser F.P."/>
            <person name="Buerckstuemmer T."/>
            <person name="Bennett K.L."/>
            <person name="Superti-Furga G."/>
            <person name="Colinge J."/>
        </authorList>
    </citation>
    <scope>IDENTIFICATION BY MASS SPECTROMETRY [LARGE SCALE ANALYSIS]</scope>
</reference>
<reference key="12">
    <citation type="journal article" date="2013" name="J. Proteome Res.">
        <title>Toward a comprehensive characterization of a human cancer cell phosphoproteome.</title>
        <authorList>
            <person name="Zhou H."/>
            <person name="Di Palma S."/>
            <person name="Preisinger C."/>
            <person name="Peng M."/>
            <person name="Polat A.N."/>
            <person name="Heck A.J."/>
            <person name="Mohammed S."/>
        </authorList>
    </citation>
    <scope>PHOSPHORYLATION [LARGE SCALE ANALYSIS] AT SER-883</scope>
    <scope>IDENTIFICATION BY MASS SPECTROMETRY [LARGE SCALE ANALYSIS]</scope>
    <source>
        <tissue>Cervix carcinoma</tissue>
        <tissue>Erythroleukemia</tissue>
    </source>
</reference>
<reference key="13">
    <citation type="journal article" date="2017" name="Nat. Struct. Mol. Biol.">
        <title>Site-specific mapping of the human SUMO proteome reveals co-modification with phosphorylation.</title>
        <authorList>
            <person name="Hendriks I.A."/>
            <person name="Lyon D."/>
            <person name="Young C."/>
            <person name="Jensen L.J."/>
            <person name="Vertegaal A.C."/>
            <person name="Nielsen M.L."/>
        </authorList>
    </citation>
    <scope>SUMOYLATION [LARGE SCALE ANALYSIS] AT LYS-143</scope>
    <scope>IDENTIFICATION BY MASS SPECTROMETRY [LARGE SCALE ANALYSIS]</scope>
</reference>
<protein>
    <recommendedName>
        <fullName>Transcription termination factor 2</fullName>
        <ecNumber>3.6.4.-</ecNumber>
    </recommendedName>
    <alternativeName>
        <fullName>Lodestar homolog</fullName>
    </alternativeName>
    <alternativeName>
        <fullName>RNA polymerase II termination factor</fullName>
    </alternativeName>
    <alternativeName>
        <fullName>Transcription release factor 2</fullName>
        <shortName>F2</shortName>
        <shortName>HuF2</shortName>
    </alternativeName>
</protein>
<gene>
    <name type="primary">TTF2</name>
</gene>
<proteinExistence type="evidence at protein level"/>
<comment type="function">
    <text evidence="5 6 8 9">DsDNA-dependent ATPase which acts as a transcription termination factor by coupling ATP hydrolysis with removal of RNA polymerase II from the DNA template. May contribute to mitotic transcription repression. May also be involved in pre-mRNA splicing.</text>
</comment>
<comment type="subunit">
    <text evidence="6">Interacts with CDC5L. Part of the spliceosome.</text>
</comment>
<comment type="interaction">
    <interactant intactId="EBI-2322921">
        <id>Q9UNY4</id>
    </interactant>
    <interactant intactId="EBI-374880">
        <id>Q99459</id>
        <label>CDC5L</label>
    </interactant>
    <organismsDiffer>false</organismsDiffer>
    <experiments>5</experiments>
</comment>
<comment type="interaction">
    <interactant intactId="EBI-11980463">
        <id>Q9UNY4-2</id>
    </interactant>
    <interactant intactId="EBI-948296">
        <id>Q9UKD1</id>
        <label>GMEB2</label>
    </interactant>
    <organismsDiffer>false</organismsDiffer>
    <experiments>3</experiments>
</comment>
<comment type="interaction">
    <interactant intactId="EBI-11980463">
        <id>Q9UNY4-2</id>
    </interactant>
    <interactant intactId="EBI-11952764">
        <id>Q99081-3</id>
        <label>TCF12</label>
    </interactant>
    <organismsDiffer>false</organismsDiffer>
    <experiments>3</experiments>
</comment>
<comment type="interaction">
    <interactant intactId="EBI-11980463">
        <id>Q9UNY4-2</id>
    </interactant>
    <interactant intactId="EBI-13636688">
        <id>P15884-3</id>
        <label>TCF4</label>
    </interactant>
    <organismsDiffer>false</organismsDiffer>
    <experiments>3</experiments>
</comment>
<comment type="interaction">
    <interactant intactId="EBI-11980463">
        <id>Q9UNY4-2</id>
    </interactant>
    <interactant intactId="EBI-357849">
        <id>Q15025</id>
        <label>TNIP1</label>
    </interactant>
    <organismsDiffer>false</organismsDiffer>
    <experiments>3</experiments>
</comment>
<comment type="subcellular location">
    <subcellularLocation>
        <location evidence="8">Cytoplasm</location>
    </subcellularLocation>
    <subcellularLocation>
        <location evidence="8">Nucleus</location>
    </subcellularLocation>
    <text>Cytoplasmic during interphase. Relocates to the nucleus as cells enter mitosis.</text>
</comment>
<comment type="alternative products">
    <event type="alternative splicing"/>
    <isoform>
        <id>Q9UNY4-1</id>
        <name>1</name>
        <sequence type="displayed"/>
    </isoform>
    <isoform>
        <id>Q9UNY4-2</id>
        <name>2</name>
        <sequence type="described" ref="VSP_015370 VSP_015371"/>
    </isoform>
</comment>
<comment type="similarity">
    <text evidence="11">Belongs to the SNF2/RAD54 helicase family.</text>
</comment>
<accession>Q9UNY4</accession>
<accession>A8K4Q2</accession>
<accession>O75921</accession>
<accession>Q5T2K7</accession>
<accession>Q5VVU8</accession>
<accession>Q8N6I8</accession>
<name>TTF2_HUMAN</name>
<dbReference type="EC" id="3.6.4.-"/>
<dbReference type="EMBL" id="AF073771">
    <property type="protein sequence ID" value="AAC64044.1"/>
    <property type="molecule type" value="mRNA"/>
</dbReference>
<dbReference type="EMBL" id="AF080255">
    <property type="protein sequence ID" value="AAD49435.1"/>
    <property type="molecule type" value="mRNA"/>
</dbReference>
<dbReference type="EMBL" id="AK291017">
    <property type="protein sequence ID" value="BAF83706.1"/>
    <property type="molecule type" value="mRNA"/>
</dbReference>
<dbReference type="EMBL" id="AL391476">
    <property type="status" value="NOT_ANNOTATED_CDS"/>
    <property type="molecule type" value="Genomic_DNA"/>
</dbReference>
<dbReference type="EMBL" id="AL445231">
    <property type="status" value="NOT_ANNOTATED_CDS"/>
    <property type="molecule type" value="Genomic_DNA"/>
</dbReference>
<dbReference type="EMBL" id="BC030058">
    <property type="protein sequence ID" value="AAH30058.1"/>
    <property type="molecule type" value="mRNA"/>
</dbReference>
<dbReference type="CCDS" id="CCDS892.1">
    <molecule id="Q9UNY4-1"/>
</dbReference>
<dbReference type="RefSeq" id="NP_003585.3">
    <molecule id="Q9UNY4-1"/>
    <property type="nucleotide sequence ID" value="NM_003594.3"/>
</dbReference>
<dbReference type="RefSeq" id="XP_016858044.1">
    <molecule id="Q9UNY4-1"/>
    <property type="nucleotide sequence ID" value="XM_017002555.3"/>
</dbReference>
<dbReference type="RefSeq" id="XP_047288108.1">
    <molecule id="Q9UNY4-1"/>
    <property type="nucleotide sequence ID" value="XM_047432152.1"/>
</dbReference>
<dbReference type="SMR" id="Q9UNY4"/>
<dbReference type="BioGRID" id="114036">
    <property type="interactions" value="196"/>
</dbReference>
<dbReference type="FunCoup" id="Q9UNY4">
    <property type="interactions" value="3048"/>
</dbReference>
<dbReference type="IntAct" id="Q9UNY4">
    <property type="interactions" value="104"/>
</dbReference>
<dbReference type="MINT" id="Q9UNY4"/>
<dbReference type="STRING" id="9606.ENSP00000358478"/>
<dbReference type="GlyGen" id="Q9UNY4">
    <property type="glycosylation" value="2 sites, 1 N-linked glycan (1 site), 1 O-linked glycan (1 site)"/>
</dbReference>
<dbReference type="iPTMnet" id="Q9UNY4"/>
<dbReference type="MetOSite" id="Q9UNY4"/>
<dbReference type="PhosphoSitePlus" id="Q9UNY4"/>
<dbReference type="BioMuta" id="TTF2"/>
<dbReference type="DMDM" id="73920148"/>
<dbReference type="jPOST" id="Q9UNY4"/>
<dbReference type="MassIVE" id="Q9UNY4"/>
<dbReference type="PaxDb" id="9606-ENSP00000358478"/>
<dbReference type="PeptideAtlas" id="Q9UNY4"/>
<dbReference type="ProteomicsDB" id="85342">
    <molecule id="Q9UNY4-1"/>
</dbReference>
<dbReference type="ProteomicsDB" id="85343">
    <molecule id="Q9UNY4-2"/>
</dbReference>
<dbReference type="Pumba" id="Q9UNY4"/>
<dbReference type="Antibodypedia" id="1775">
    <property type="antibodies" value="193 antibodies from 26 providers"/>
</dbReference>
<dbReference type="DNASU" id="8458"/>
<dbReference type="Ensembl" id="ENST00000369466.9">
    <molecule id="Q9UNY4-1"/>
    <property type="protein sequence ID" value="ENSP00000358478.3"/>
    <property type="gene ID" value="ENSG00000116830.12"/>
</dbReference>
<dbReference type="GeneID" id="8458"/>
<dbReference type="KEGG" id="hsa:8458"/>
<dbReference type="MANE-Select" id="ENST00000369466.9">
    <property type="protein sequence ID" value="ENSP00000358478.3"/>
    <property type="RefSeq nucleotide sequence ID" value="NM_003594.4"/>
    <property type="RefSeq protein sequence ID" value="NP_003585.3"/>
</dbReference>
<dbReference type="UCSC" id="uc001egy.4">
    <molecule id="Q9UNY4-1"/>
    <property type="organism name" value="human"/>
</dbReference>
<dbReference type="AGR" id="HGNC:12398"/>
<dbReference type="CTD" id="8458"/>
<dbReference type="DisGeNET" id="8458"/>
<dbReference type="GeneCards" id="TTF2"/>
<dbReference type="HGNC" id="HGNC:12398">
    <property type="gene designation" value="TTF2"/>
</dbReference>
<dbReference type="HPA" id="ENSG00000116830">
    <property type="expression patterns" value="Low tissue specificity"/>
</dbReference>
<dbReference type="MIM" id="604718">
    <property type="type" value="gene"/>
</dbReference>
<dbReference type="neXtProt" id="NX_Q9UNY4"/>
<dbReference type="OpenTargets" id="ENSG00000116830"/>
<dbReference type="PharmGKB" id="PA37063"/>
<dbReference type="VEuPathDB" id="HostDB:ENSG00000116830"/>
<dbReference type="eggNOG" id="KOG4439">
    <property type="taxonomic scope" value="Eukaryota"/>
</dbReference>
<dbReference type="GeneTree" id="ENSGT00940000162718"/>
<dbReference type="HOGENOM" id="CLU_000315_2_2_1"/>
<dbReference type="InParanoid" id="Q9UNY4"/>
<dbReference type="OMA" id="IVSQWTN"/>
<dbReference type="OrthoDB" id="423559at2759"/>
<dbReference type="PAN-GO" id="Q9UNY4">
    <property type="GO annotations" value="3 GO annotations based on evolutionary models"/>
</dbReference>
<dbReference type="PhylomeDB" id="Q9UNY4"/>
<dbReference type="TreeFam" id="TF316297"/>
<dbReference type="PathwayCommons" id="Q9UNY4"/>
<dbReference type="SignaLink" id="Q9UNY4"/>
<dbReference type="SIGNOR" id="Q9UNY4"/>
<dbReference type="BioGRID-ORCS" id="8458">
    <property type="hits" value="425 hits in 1173 CRISPR screens"/>
</dbReference>
<dbReference type="ChiTaRS" id="TTF2">
    <property type="organism name" value="human"/>
</dbReference>
<dbReference type="GeneWiki" id="TTF2"/>
<dbReference type="GenomeRNAi" id="8458"/>
<dbReference type="Pharos" id="Q9UNY4">
    <property type="development level" value="Tbio"/>
</dbReference>
<dbReference type="PRO" id="PR:Q9UNY4"/>
<dbReference type="Proteomes" id="UP000005640">
    <property type="component" value="Chromosome 1"/>
</dbReference>
<dbReference type="RNAct" id="Q9UNY4">
    <property type="molecule type" value="protein"/>
</dbReference>
<dbReference type="Bgee" id="ENSG00000116830">
    <property type="expression patterns" value="Expressed in sural nerve and 146 other cell types or tissues"/>
</dbReference>
<dbReference type="ExpressionAtlas" id="Q9UNY4">
    <property type="expression patterns" value="baseline and differential"/>
</dbReference>
<dbReference type="GO" id="GO:0005829">
    <property type="term" value="C:cytosol"/>
    <property type="evidence" value="ECO:0000314"/>
    <property type="project" value="HPA"/>
</dbReference>
<dbReference type="GO" id="GO:0005634">
    <property type="term" value="C:nucleus"/>
    <property type="evidence" value="ECO:0000318"/>
    <property type="project" value="GO_Central"/>
</dbReference>
<dbReference type="GO" id="GO:0005681">
    <property type="term" value="C:spliceosomal complex"/>
    <property type="evidence" value="ECO:0007669"/>
    <property type="project" value="UniProtKB-KW"/>
</dbReference>
<dbReference type="GO" id="GO:0008023">
    <property type="term" value="C:transcription elongation factor complex"/>
    <property type="evidence" value="ECO:0000304"/>
    <property type="project" value="ProtInc"/>
</dbReference>
<dbReference type="GO" id="GO:0005524">
    <property type="term" value="F:ATP binding"/>
    <property type="evidence" value="ECO:0007669"/>
    <property type="project" value="UniProtKB-KW"/>
</dbReference>
<dbReference type="GO" id="GO:0008094">
    <property type="term" value="F:ATP-dependent activity, acting on DNA"/>
    <property type="evidence" value="ECO:0000314"/>
    <property type="project" value="FlyBase"/>
</dbReference>
<dbReference type="GO" id="GO:0003677">
    <property type="term" value="F:DNA binding"/>
    <property type="evidence" value="ECO:0007669"/>
    <property type="project" value="UniProtKB-KW"/>
</dbReference>
<dbReference type="GO" id="GO:0004386">
    <property type="term" value="F:helicase activity"/>
    <property type="evidence" value="ECO:0007669"/>
    <property type="project" value="UniProtKB-KW"/>
</dbReference>
<dbReference type="GO" id="GO:0016787">
    <property type="term" value="F:hydrolase activity"/>
    <property type="evidence" value="ECO:0007669"/>
    <property type="project" value="UniProtKB-KW"/>
</dbReference>
<dbReference type="GO" id="GO:0008270">
    <property type="term" value="F:zinc ion binding"/>
    <property type="evidence" value="ECO:0007669"/>
    <property type="project" value="UniProtKB-KW"/>
</dbReference>
<dbReference type="GO" id="GO:0006281">
    <property type="term" value="P:DNA repair"/>
    <property type="evidence" value="ECO:0000318"/>
    <property type="project" value="GO_Central"/>
</dbReference>
<dbReference type="GO" id="GO:0006353">
    <property type="term" value="P:DNA-templated transcription termination"/>
    <property type="evidence" value="ECO:0000304"/>
    <property type="project" value="ProtInc"/>
</dbReference>
<dbReference type="GO" id="GO:0006397">
    <property type="term" value="P:mRNA processing"/>
    <property type="evidence" value="ECO:0007669"/>
    <property type="project" value="UniProtKB-KW"/>
</dbReference>
<dbReference type="GO" id="GO:0008380">
    <property type="term" value="P:RNA splicing"/>
    <property type="evidence" value="ECO:0007669"/>
    <property type="project" value="UniProtKB-KW"/>
</dbReference>
<dbReference type="GO" id="GO:0006369">
    <property type="term" value="P:termination of RNA polymerase II transcription"/>
    <property type="evidence" value="ECO:0000304"/>
    <property type="project" value="ProtInc"/>
</dbReference>
<dbReference type="CDD" id="cd18072">
    <property type="entry name" value="DEXHc_TTF2"/>
    <property type="match status" value="1"/>
</dbReference>
<dbReference type="CDD" id="cd18793">
    <property type="entry name" value="SF2_C_SNF"/>
    <property type="match status" value="1"/>
</dbReference>
<dbReference type="FunFam" id="3.40.50.10810:FF:000043">
    <property type="entry name" value="Transcription termination factor 2"/>
    <property type="match status" value="1"/>
</dbReference>
<dbReference type="FunFam" id="3.40.50.300:FF:001502">
    <property type="entry name" value="Transcription termination factor 2"/>
    <property type="match status" value="1"/>
</dbReference>
<dbReference type="Gene3D" id="3.40.50.300">
    <property type="entry name" value="P-loop containing nucleotide triphosphate hydrolases"/>
    <property type="match status" value="1"/>
</dbReference>
<dbReference type="Gene3D" id="3.40.50.10810">
    <property type="entry name" value="Tandem AAA-ATPase domain"/>
    <property type="match status" value="1"/>
</dbReference>
<dbReference type="InterPro" id="IPR002464">
    <property type="entry name" value="DNA/RNA_helicase_DEAH_CS"/>
</dbReference>
<dbReference type="InterPro" id="IPR014001">
    <property type="entry name" value="Helicase_ATP-bd"/>
</dbReference>
<dbReference type="InterPro" id="IPR001650">
    <property type="entry name" value="Helicase_C-like"/>
</dbReference>
<dbReference type="InterPro" id="IPR027417">
    <property type="entry name" value="P-loop_NTPase"/>
</dbReference>
<dbReference type="InterPro" id="IPR038718">
    <property type="entry name" value="SNF2-like_sf"/>
</dbReference>
<dbReference type="InterPro" id="IPR049730">
    <property type="entry name" value="SNF2/RAD54-like_C"/>
</dbReference>
<dbReference type="InterPro" id="IPR000330">
    <property type="entry name" value="SNF2_N"/>
</dbReference>
<dbReference type="InterPro" id="IPR050628">
    <property type="entry name" value="SNF2_RAD54_helicase_TF"/>
</dbReference>
<dbReference type="InterPro" id="IPR010666">
    <property type="entry name" value="Znf_GRF"/>
</dbReference>
<dbReference type="PANTHER" id="PTHR45626:SF50">
    <property type="entry name" value="TRANSCRIPTION TERMINATION FACTOR 2"/>
    <property type="match status" value="1"/>
</dbReference>
<dbReference type="PANTHER" id="PTHR45626">
    <property type="entry name" value="TRANSCRIPTION TERMINATION FACTOR 2-RELATED"/>
    <property type="match status" value="1"/>
</dbReference>
<dbReference type="Pfam" id="PF00271">
    <property type="entry name" value="Helicase_C"/>
    <property type="match status" value="1"/>
</dbReference>
<dbReference type="Pfam" id="PF00176">
    <property type="entry name" value="SNF2-rel_dom"/>
    <property type="match status" value="1"/>
</dbReference>
<dbReference type="Pfam" id="PF06839">
    <property type="entry name" value="Zn_ribbon_GRF"/>
    <property type="match status" value="1"/>
</dbReference>
<dbReference type="SMART" id="SM00487">
    <property type="entry name" value="DEXDc"/>
    <property type="match status" value="1"/>
</dbReference>
<dbReference type="SMART" id="SM00490">
    <property type="entry name" value="HELICc"/>
    <property type="match status" value="1"/>
</dbReference>
<dbReference type="SUPFAM" id="SSF52540">
    <property type="entry name" value="P-loop containing nucleoside triphosphate hydrolases"/>
    <property type="match status" value="2"/>
</dbReference>
<dbReference type="PROSITE" id="PS00690">
    <property type="entry name" value="DEAH_ATP_HELICASE"/>
    <property type="match status" value="1"/>
</dbReference>
<dbReference type="PROSITE" id="PS51192">
    <property type="entry name" value="HELICASE_ATP_BIND_1"/>
    <property type="match status" value="1"/>
</dbReference>
<dbReference type="PROSITE" id="PS51194">
    <property type="entry name" value="HELICASE_CTER"/>
    <property type="match status" value="1"/>
</dbReference>
<dbReference type="PROSITE" id="PS51999">
    <property type="entry name" value="ZF_GRF"/>
    <property type="match status" value="1"/>
</dbReference>
<keyword id="KW-0025">Alternative splicing</keyword>
<keyword id="KW-0067">ATP-binding</keyword>
<keyword id="KW-0963">Cytoplasm</keyword>
<keyword id="KW-0238">DNA-binding</keyword>
<keyword id="KW-0347">Helicase</keyword>
<keyword id="KW-0378">Hydrolase</keyword>
<keyword id="KW-1017">Isopeptide bond</keyword>
<keyword id="KW-0479">Metal-binding</keyword>
<keyword id="KW-0507">mRNA processing</keyword>
<keyword id="KW-0508">mRNA splicing</keyword>
<keyword id="KW-0547">Nucleotide-binding</keyword>
<keyword id="KW-0539">Nucleus</keyword>
<keyword id="KW-0597">Phosphoprotein</keyword>
<keyword id="KW-1267">Proteomics identification</keyword>
<keyword id="KW-1185">Reference proteome</keyword>
<keyword id="KW-0747">Spliceosome</keyword>
<keyword id="KW-0804">Transcription</keyword>
<keyword id="KW-0805">Transcription regulation</keyword>
<keyword id="KW-0806">Transcription termination</keyword>
<keyword id="KW-0832">Ubl conjugation</keyword>
<keyword id="KW-0862">Zinc</keyword>
<keyword id="KW-0863">Zinc-finger</keyword>